<comment type="function">
    <text evidence="3">Component of the elongator complex, which is required for multiple tRNA modifications, including mcm5U (5-methoxycarbonylmethyl uridine), mcm5s2U (5-methoxycarbonylmethyl-2-thiouridine), and ncm5U (5-carbamoylmethyl uridine) (PubMed:36302967). The elongator complex catalyzes the formation of carboxymethyluridine in the wobble base at position 34 in tRNAs (PubMed:36302967). Binding by the elongator complex stabilizes microtubules and promotes their growth (PubMed:36302967). This induces central spindle asymmetry, promoting polarized signaling endosome trafficking during asymmetric cell division and cell fate assignation of sensory organ precursor cells (PubMed:36302967).</text>
</comment>
<comment type="pathway">
    <text evidence="1">tRNA modification; 5-methoxycarbonylmethyl-2-thiouridine-tRNA biosynthesis.</text>
</comment>
<comment type="subunit">
    <text evidence="3">Component of the elongator complex composed of Elp1, Elp2, Elp3, Elp4, Elp5 and Elp6 (PubMed:36302967). The elongator complex associates with and stabilizes microtubules; efficient interaction requires the full complex (PubMed:36302967).</text>
</comment>
<comment type="subcellular location">
    <subcellularLocation>
        <location evidence="1">Cytoplasm</location>
    </subcellularLocation>
    <subcellularLocation>
        <location evidence="1">Nucleus</location>
    </subcellularLocation>
    <subcellularLocation>
        <location evidence="5">Cytoplasm</location>
        <location evidence="5">Cytoskeleton</location>
        <location evidence="5">Spindle</location>
    </subcellularLocation>
    <text evidence="3">During asymmetric cell division of sensory organ precursor cells the elongator complex preferentially binds and stabilizes microtubules on the anterior side (pIIb daughter cell) of the spindle.</text>
</comment>
<comment type="disruption phenotype">
    <text evidence="3">RNAi-mediated knockdown is pupal lethal.</text>
</comment>
<comment type="similarity">
    <text evidence="4">Belongs to the ELP5 family.</text>
</comment>
<comment type="caution">
    <text evidence="1">The elongator complex was originally thought to play a role in transcription elongation. However, it is no longer thought to play a direct role in this process and its primary function is thought to be in tRNA modification.</text>
</comment>
<keyword id="KW-0963">Cytoplasm</keyword>
<keyword id="KW-0206">Cytoskeleton</keyword>
<keyword id="KW-0493">Microtubule</keyword>
<keyword id="KW-0539">Nucleus</keyword>
<keyword id="KW-1185">Reference proteome</keyword>
<keyword id="KW-0819">tRNA processing</keyword>
<organism evidence="9">
    <name type="scientific">Drosophila melanogaster</name>
    <name type="common">Fruit fly</name>
    <dbReference type="NCBI Taxonomy" id="7227"/>
    <lineage>
        <taxon>Eukaryota</taxon>
        <taxon>Metazoa</taxon>
        <taxon>Ecdysozoa</taxon>
        <taxon>Arthropoda</taxon>
        <taxon>Hexapoda</taxon>
        <taxon>Insecta</taxon>
        <taxon>Pterygota</taxon>
        <taxon>Neoptera</taxon>
        <taxon>Endopterygota</taxon>
        <taxon>Diptera</taxon>
        <taxon>Brachycera</taxon>
        <taxon>Muscomorpha</taxon>
        <taxon>Ephydroidea</taxon>
        <taxon>Drosophilidae</taxon>
        <taxon>Drosophila</taxon>
        <taxon>Sophophora</taxon>
    </lineage>
</organism>
<proteinExistence type="evidence at protein level"/>
<reference evidence="6" key="1">
    <citation type="submission" date="1995-03" db="EMBL/GenBank/DDBJ databases">
        <authorList>
            <person name="Bessarab D.A."/>
            <person name="Sun H.Y."/>
        </authorList>
    </citation>
    <scope>NUCLEOTIDE SEQUENCE [MRNA]</scope>
</reference>
<reference evidence="9" key="2">
    <citation type="journal article" date="2000" name="Science">
        <title>The genome sequence of Drosophila melanogaster.</title>
        <authorList>
            <person name="Adams M.D."/>
            <person name="Celniker S.E."/>
            <person name="Holt R.A."/>
            <person name="Evans C.A."/>
            <person name="Gocayne J.D."/>
            <person name="Amanatides P.G."/>
            <person name="Scherer S.E."/>
            <person name="Li P.W."/>
            <person name="Hoskins R.A."/>
            <person name="Galle R.F."/>
            <person name="George R.A."/>
            <person name="Lewis S.E."/>
            <person name="Richards S."/>
            <person name="Ashburner M."/>
            <person name="Henderson S.N."/>
            <person name="Sutton G.G."/>
            <person name="Wortman J.R."/>
            <person name="Yandell M.D."/>
            <person name="Zhang Q."/>
            <person name="Chen L.X."/>
            <person name="Brandon R.C."/>
            <person name="Rogers Y.-H.C."/>
            <person name="Blazej R.G."/>
            <person name="Champe M."/>
            <person name="Pfeiffer B.D."/>
            <person name="Wan K.H."/>
            <person name="Doyle C."/>
            <person name="Baxter E.G."/>
            <person name="Helt G."/>
            <person name="Nelson C.R."/>
            <person name="Miklos G.L.G."/>
            <person name="Abril J.F."/>
            <person name="Agbayani A."/>
            <person name="An H.-J."/>
            <person name="Andrews-Pfannkoch C."/>
            <person name="Baldwin D."/>
            <person name="Ballew R.M."/>
            <person name="Basu A."/>
            <person name="Baxendale J."/>
            <person name="Bayraktaroglu L."/>
            <person name="Beasley E.M."/>
            <person name="Beeson K.Y."/>
            <person name="Benos P.V."/>
            <person name="Berman B.P."/>
            <person name="Bhandari D."/>
            <person name="Bolshakov S."/>
            <person name="Borkova D."/>
            <person name="Botchan M.R."/>
            <person name="Bouck J."/>
            <person name="Brokstein P."/>
            <person name="Brottier P."/>
            <person name="Burtis K.C."/>
            <person name="Busam D.A."/>
            <person name="Butler H."/>
            <person name="Cadieu E."/>
            <person name="Center A."/>
            <person name="Chandra I."/>
            <person name="Cherry J.M."/>
            <person name="Cawley S."/>
            <person name="Dahlke C."/>
            <person name="Davenport L.B."/>
            <person name="Davies P."/>
            <person name="de Pablos B."/>
            <person name="Delcher A."/>
            <person name="Deng Z."/>
            <person name="Mays A.D."/>
            <person name="Dew I."/>
            <person name="Dietz S.M."/>
            <person name="Dodson K."/>
            <person name="Doup L.E."/>
            <person name="Downes M."/>
            <person name="Dugan-Rocha S."/>
            <person name="Dunkov B.C."/>
            <person name="Dunn P."/>
            <person name="Durbin K.J."/>
            <person name="Evangelista C.C."/>
            <person name="Ferraz C."/>
            <person name="Ferriera S."/>
            <person name="Fleischmann W."/>
            <person name="Fosler C."/>
            <person name="Gabrielian A.E."/>
            <person name="Garg N.S."/>
            <person name="Gelbart W.M."/>
            <person name="Glasser K."/>
            <person name="Glodek A."/>
            <person name="Gong F."/>
            <person name="Gorrell J.H."/>
            <person name="Gu Z."/>
            <person name="Guan P."/>
            <person name="Harris M."/>
            <person name="Harris N.L."/>
            <person name="Harvey D.A."/>
            <person name="Heiman T.J."/>
            <person name="Hernandez J.R."/>
            <person name="Houck J."/>
            <person name="Hostin D."/>
            <person name="Houston K.A."/>
            <person name="Howland T.J."/>
            <person name="Wei M.-H."/>
            <person name="Ibegwam C."/>
            <person name="Jalali M."/>
            <person name="Kalush F."/>
            <person name="Karpen G.H."/>
            <person name="Ke Z."/>
            <person name="Kennison J.A."/>
            <person name="Ketchum K.A."/>
            <person name="Kimmel B.E."/>
            <person name="Kodira C.D."/>
            <person name="Kraft C.L."/>
            <person name="Kravitz S."/>
            <person name="Kulp D."/>
            <person name="Lai Z."/>
            <person name="Lasko P."/>
            <person name="Lei Y."/>
            <person name="Levitsky A.A."/>
            <person name="Li J.H."/>
            <person name="Li Z."/>
            <person name="Liang Y."/>
            <person name="Lin X."/>
            <person name="Liu X."/>
            <person name="Mattei B."/>
            <person name="McIntosh T.C."/>
            <person name="McLeod M.P."/>
            <person name="McPherson D."/>
            <person name="Merkulov G."/>
            <person name="Milshina N.V."/>
            <person name="Mobarry C."/>
            <person name="Morris J."/>
            <person name="Moshrefi A."/>
            <person name="Mount S.M."/>
            <person name="Moy M."/>
            <person name="Murphy B."/>
            <person name="Murphy L."/>
            <person name="Muzny D.M."/>
            <person name="Nelson D.L."/>
            <person name="Nelson D.R."/>
            <person name="Nelson K.A."/>
            <person name="Nixon K."/>
            <person name="Nusskern D.R."/>
            <person name="Pacleb J.M."/>
            <person name="Palazzolo M."/>
            <person name="Pittman G.S."/>
            <person name="Pan S."/>
            <person name="Pollard J."/>
            <person name="Puri V."/>
            <person name="Reese M.G."/>
            <person name="Reinert K."/>
            <person name="Remington K."/>
            <person name="Saunders R.D.C."/>
            <person name="Scheeler F."/>
            <person name="Shen H."/>
            <person name="Shue B.C."/>
            <person name="Siden-Kiamos I."/>
            <person name="Simpson M."/>
            <person name="Skupski M.P."/>
            <person name="Smith T.J."/>
            <person name="Spier E."/>
            <person name="Spradling A.C."/>
            <person name="Stapleton M."/>
            <person name="Strong R."/>
            <person name="Sun E."/>
            <person name="Svirskas R."/>
            <person name="Tector C."/>
            <person name="Turner R."/>
            <person name="Venter E."/>
            <person name="Wang A.H."/>
            <person name="Wang X."/>
            <person name="Wang Z.-Y."/>
            <person name="Wassarman D.A."/>
            <person name="Weinstock G.M."/>
            <person name="Weissenbach J."/>
            <person name="Williams S.M."/>
            <person name="Woodage T."/>
            <person name="Worley K.C."/>
            <person name="Wu D."/>
            <person name="Yang S."/>
            <person name="Yao Q.A."/>
            <person name="Ye J."/>
            <person name="Yeh R.-F."/>
            <person name="Zaveri J.S."/>
            <person name="Zhan M."/>
            <person name="Zhang G."/>
            <person name="Zhao Q."/>
            <person name="Zheng L."/>
            <person name="Zheng X.H."/>
            <person name="Zhong F.N."/>
            <person name="Zhong W."/>
            <person name="Zhou X."/>
            <person name="Zhu S.C."/>
            <person name="Zhu X."/>
            <person name="Smith H.O."/>
            <person name="Gibbs R.A."/>
            <person name="Myers E.W."/>
            <person name="Rubin G.M."/>
            <person name="Venter J.C."/>
        </authorList>
    </citation>
    <scope>NUCLEOTIDE SEQUENCE [LARGE SCALE GENOMIC DNA]</scope>
    <source>
        <strain evidence="9">Berkeley</strain>
    </source>
</reference>
<reference evidence="9" key="3">
    <citation type="journal article" date="2002" name="Genome Biol.">
        <title>Annotation of the Drosophila melanogaster euchromatic genome: a systematic review.</title>
        <authorList>
            <person name="Misra S."/>
            <person name="Crosby M.A."/>
            <person name="Mungall C.J."/>
            <person name="Matthews B.B."/>
            <person name="Campbell K.S."/>
            <person name="Hradecky P."/>
            <person name="Huang Y."/>
            <person name="Kaminker J.S."/>
            <person name="Millburn G.H."/>
            <person name="Prochnik S.E."/>
            <person name="Smith C.D."/>
            <person name="Tupy J.L."/>
            <person name="Whitfield E.J."/>
            <person name="Bayraktaroglu L."/>
            <person name="Berman B.P."/>
            <person name="Bettencourt B.R."/>
            <person name="Celniker S.E."/>
            <person name="de Grey A.D.N.J."/>
            <person name="Drysdale R.A."/>
            <person name="Harris N.L."/>
            <person name="Richter J."/>
            <person name="Russo S."/>
            <person name="Schroeder A.J."/>
            <person name="Shu S.Q."/>
            <person name="Stapleton M."/>
            <person name="Yamada C."/>
            <person name="Ashburner M."/>
            <person name="Gelbart W.M."/>
            <person name="Rubin G.M."/>
            <person name="Lewis S.E."/>
        </authorList>
    </citation>
    <scope>GENOME REANNOTATION</scope>
    <source>
        <strain evidence="9">Berkeley</strain>
    </source>
</reference>
<reference evidence="7" key="4">
    <citation type="journal article" date="2002" name="Genome Biol.">
        <title>A Drosophila full-length cDNA resource.</title>
        <authorList>
            <person name="Stapleton M."/>
            <person name="Carlson J.W."/>
            <person name="Brokstein P."/>
            <person name="Yu C."/>
            <person name="Champe M."/>
            <person name="George R.A."/>
            <person name="Guarin H."/>
            <person name="Kronmiller B."/>
            <person name="Pacleb J.M."/>
            <person name="Park S."/>
            <person name="Wan K.H."/>
            <person name="Rubin G.M."/>
            <person name="Celniker S.E."/>
        </authorList>
    </citation>
    <scope>NUCLEOTIDE SEQUENCE [LARGE SCALE MRNA]</scope>
    <source>
        <strain evidence="7">Berkeley</strain>
        <tissue evidence="7">Embryo</tissue>
    </source>
</reference>
<reference evidence="4" key="5">
    <citation type="journal article" date="2022" name="Nat. Cell Biol.">
        <title>Elongator stabilizes microtubules to control central spindle asymmetry and polarized trafficking of cell fate determinants.</title>
        <authorList>
            <person name="Planelles-Herrero V.J."/>
            <person name="Bittleston A."/>
            <person name="Seum C."/>
            <person name="Daeden A."/>
            <person name="Gaitan M.G."/>
            <person name="Derivery E."/>
        </authorList>
    </citation>
    <scope>FUNCTION</scope>
    <scope>IDENTIFICATION IN THE ELONGATOR COMPLEX</scope>
    <scope>INTERACTION WITH MICROTUBULES</scope>
    <scope>SUBCELLULAR LOCATION</scope>
    <scope>DISRUPTION PHENOTYPE</scope>
    <scope>IDENTIFICATION BY MASS SPECTROMETRY</scope>
</reference>
<gene>
    <name evidence="8" type="primary">Elp5</name>
    <name evidence="8" type="ORF">CG2034</name>
</gene>
<protein>
    <recommendedName>
        <fullName evidence="4">Elongator complex protein 5</fullName>
    </recommendedName>
</protein>
<accession>Q24050</accession>
<sequence length="262" mass="28883">MLSNLVVTKQKVVLVIDELNRERIAPKFIGSLLHEQGQGADTIKALPTGVSLKHVATFEALIDKYANNNTGSTTDSNSTGFNVILPTLADLLCYQTPAFIFGFLNRLRRSDNVRRVFLWASPQHLQDPHADYILAGCEYLAELVLRLESDKLLSLISRKPGGGVSNRRYSCEVSKTQFKVTPLDGGLPAGASPKQPSPEAEQTTEPASSTFKIELDEDEVLARNALTLPYERTSEPSEGNIIYTPDADDDFDEEDPDEDLCI</sequence>
<name>ELP5_DROME</name>
<evidence type="ECO:0000250" key="1">
    <source>
        <dbReference type="UniProtKB" id="Q8TE02"/>
    </source>
</evidence>
<evidence type="ECO:0000256" key="2">
    <source>
        <dbReference type="SAM" id="MobiDB-lite"/>
    </source>
</evidence>
<evidence type="ECO:0000269" key="3">
    <source>
    </source>
</evidence>
<evidence type="ECO:0000305" key="4"/>
<evidence type="ECO:0000305" key="5">
    <source>
    </source>
</evidence>
<evidence type="ECO:0000312" key="6">
    <source>
        <dbReference type="EMBL" id="AAA69506.1"/>
    </source>
</evidence>
<evidence type="ECO:0000312" key="7">
    <source>
        <dbReference type="EMBL" id="AAM51043.1"/>
    </source>
</evidence>
<evidence type="ECO:0000312" key="8">
    <source>
        <dbReference type="FlyBase" id="FBgn0015359"/>
    </source>
</evidence>
<evidence type="ECO:0000312" key="9">
    <source>
        <dbReference type="Proteomes" id="UP000000803"/>
    </source>
</evidence>
<dbReference type="EMBL" id="U23185">
    <property type="protein sequence ID" value="AAA69506.1"/>
    <property type="molecule type" value="mRNA"/>
</dbReference>
<dbReference type="EMBL" id="AE014296">
    <property type="protein sequence ID" value="AAF47624.1"/>
    <property type="molecule type" value="Genomic_DNA"/>
</dbReference>
<dbReference type="EMBL" id="AE014296">
    <property type="protein sequence ID" value="AGB94017.1"/>
    <property type="molecule type" value="Genomic_DNA"/>
</dbReference>
<dbReference type="EMBL" id="AY119183">
    <property type="protein sequence ID" value="AAM51043.1"/>
    <property type="molecule type" value="mRNA"/>
</dbReference>
<dbReference type="RefSeq" id="NP_001261322.1">
    <property type="nucleotide sequence ID" value="NM_001274393.1"/>
</dbReference>
<dbReference type="RefSeq" id="NP_647704.1">
    <property type="nucleotide sequence ID" value="NM_139447.2"/>
</dbReference>
<dbReference type="SMR" id="Q24050"/>
<dbReference type="ComplexPortal" id="CPX-10346">
    <property type="entry name" value="Elongator holoenzyme complex"/>
</dbReference>
<dbReference type="FunCoup" id="Q24050">
    <property type="interactions" value="46"/>
</dbReference>
<dbReference type="IntAct" id="Q24050">
    <property type="interactions" value="7"/>
</dbReference>
<dbReference type="STRING" id="7227.FBpp0304910"/>
<dbReference type="PaxDb" id="7227-FBpp0304910"/>
<dbReference type="DNASU" id="38287"/>
<dbReference type="EnsemblMetazoa" id="FBtr0072877">
    <property type="protein sequence ID" value="FBpp0072756"/>
    <property type="gene ID" value="FBgn0015359"/>
</dbReference>
<dbReference type="EnsemblMetazoa" id="FBtr0332664">
    <property type="protein sequence ID" value="FBpp0304910"/>
    <property type="gene ID" value="FBgn0015359"/>
</dbReference>
<dbReference type="GeneID" id="38287"/>
<dbReference type="KEGG" id="dme:Dmel_CG2034"/>
<dbReference type="UCSC" id="CG2034-RA">
    <property type="organism name" value="d. melanogaster"/>
</dbReference>
<dbReference type="AGR" id="FB:FBgn0015359"/>
<dbReference type="CTD" id="23587"/>
<dbReference type="FlyBase" id="FBgn0015359">
    <property type="gene designation" value="Elp5"/>
</dbReference>
<dbReference type="VEuPathDB" id="VectorBase:FBgn0015359"/>
<dbReference type="eggNOG" id="ENOG502SDSR">
    <property type="taxonomic scope" value="Eukaryota"/>
</dbReference>
<dbReference type="HOGENOM" id="CLU_091122_0_0_1"/>
<dbReference type="OMA" id="DLLCYQS"/>
<dbReference type="OrthoDB" id="166907at2759"/>
<dbReference type="UniPathway" id="UPA00988"/>
<dbReference type="BioGRID-ORCS" id="38287">
    <property type="hits" value="1 hit in 1 CRISPR screen"/>
</dbReference>
<dbReference type="GenomeRNAi" id="38287"/>
<dbReference type="Proteomes" id="UP000000803">
    <property type="component" value="Chromosome 3L"/>
</dbReference>
<dbReference type="Bgee" id="FBgn0015359">
    <property type="expression patterns" value="Expressed in spermatocyte in testis and 74 other cell types or tissues"/>
</dbReference>
<dbReference type="GO" id="GO:0005829">
    <property type="term" value="C:cytosol"/>
    <property type="evidence" value="ECO:0000318"/>
    <property type="project" value="GO_Central"/>
</dbReference>
<dbReference type="GO" id="GO:0033588">
    <property type="term" value="C:elongator holoenzyme complex"/>
    <property type="evidence" value="ECO:0000314"/>
    <property type="project" value="FlyBase"/>
</dbReference>
<dbReference type="GO" id="GO:0005874">
    <property type="term" value="C:microtubule"/>
    <property type="evidence" value="ECO:0007669"/>
    <property type="project" value="UniProtKB-KW"/>
</dbReference>
<dbReference type="GO" id="GO:0005634">
    <property type="term" value="C:nucleus"/>
    <property type="evidence" value="ECO:0000318"/>
    <property type="project" value="GO_Central"/>
</dbReference>
<dbReference type="GO" id="GO:0005819">
    <property type="term" value="C:spindle"/>
    <property type="evidence" value="ECO:0007669"/>
    <property type="project" value="UniProtKB-SubCell"/>
</dbReference>
<dbReference type="GO" id="GO:0061867">
    <property type="term" value="P:establishment of mitotic spindle asymmetry"/>
    <property type="evidence" value="ECO:0000314"/>
    <property type="project" value="FlyBase"/>
</dbReference>
<dbReference type="GO" id="GO:0006400">
    <property type="term" value="P:tRNA modification"/>
    <property type="evidence" value="ECO:0000318"/>
    <property type="project" value="GO_Central"/>
</dbReference>
<dbReference type="GO" id="GO:0002098">
    <property type="term" value="P:tRNA wobble uridine modification"/>
    <property type="evidence" value="ECO:0007669"/>
    <property type="project" value="InterPro"/>
</dbReference>
<dbReference type="InterPro" id="IPR019519">
    <property type="entry name" value="Elp5"/>
</dbReference>
<dbReference type="PANTHER" id="PTHR15641">
    <property type="entry name" value="ELONGATOR COMPLEX PROTEIN 5"/>
    <property type="match status" value="1"/>
</dbReference>
<dbReference type="PANTHER" id="PTHR15641:SF1">
    <property type="entry name" value="ELONGATOR COMPLEX PROTEIN 5"/>
    <property type="match status" value="1"/>
</dbReference>
<feature type="chain" id="PRO_0000460689" description="Elongator complex protein 5">
    <location>
        <begin position="1"/>
        <end position="262"/>
    </location>
</feature>
<feature type="region of interest" description="Disordered" evidence="2">
    <location>
        <begin position="181"/>
        <end position="214"/>
    </location>
</feature>
<feature type="region of interest" description="Disordered" evidence="2">
    <location>
        <begin position="229"/>
        <end position="262"/>
    </location>
</feature>
<feature type="compositionally biased region" description="Polar residues" evidence="2">
    <location>
        <begin position="200"/>
        <end position="211"/>
    </location>
</feature>
<feature type="compositionally biased region" description="Acidic residues" evidence="2">
    <location>
        <begin position="246"/>
        <end position="262"/>
    </location>
</feature>